<proteinExistence type="inferred from homology"/>
<gene>
    <name evidence="1" type="primary">tmk</name>
    <name type="ordered locus">MW0437</name>
</gene>
<organism>
    <name type="scientific">Staphylococcus aureus (strain MW2)</name>
    <dbReference type="NCBI Taxonomy" id="196620"/>
    <lineage>
        <taxon>Bacteria</taxon>
        <taxon>Bacillati</taxon>
        <taxon>Bacillota</taxon>
        <taxon>Bacilli</taxon>
        <taxon>Bacillales</taxon>
        <taxon>Staphylococcaceae</taxon>
        <taxon>Staphylococcus</taxon>
    </lineage>
</organism>
<sequence>MSAFITFEGPEGSGKTTVINKVYHRLVKDYDVIMTREPGGVPTGEEIRKIVLEGNDMDIRTEAMLFAASRREHLVLKVIPALKEGKVVLCDRYIDSSLAYQGYARGIGVEEVRALNEFAINGLYPDLTIYLNVSAEVGRERIIKNSRDQNRLDQEDLKFHEKVIEGYQEIIHNESQRFKSVNADQPLENVVEDTYQTIIKYLEKI</sequence>
<feature type="chain" id="PRO_0000155343" description="Thymidylate kinase">
    <location>
        <begin position="1"/>
        <end position="205"/>
    </location>
</feature>
<feature type="binding site" evidence="1">
    <location>
        <begin position="9"/>
        <end position="16"/>
    </location>
    <ligand>
        <name>ATP</name>
        <dbReference type="ChEBI" id="CHEBI:30616"/>
    </ligand>
</feature>
<protein>
    <recommendedName>
        <fullName evidence="1">Thymidylate kinase</fullName>
        <ecNumber evidence="1">2.7.4.9</ecNumber>
    </recommendedName>
    <alternativeName>
        <fullName evidence="1">dTMP kinase</fullName>
    </alternativeName>
</protein>
<accession>Q8NY05</accession>
<keyword id="KW-0067">ATP-binding</keyword>
<keyword id="KW-0418">Kinase</keyword>
<keyword id="KW-0545">Nucleotide biosynthesis</keyword>
<keyword id="KW-0547">Nucleotide-binding</keyword>
<keyword id="KW-0808">Transferase</keyword>
<comment type="function">
    <text evidence="1">Phosphorylation of dTMP to form dTDP in both de novo and salvage pathways of dTTP synthesis.</text>
</comment>
<comment type="catalytic activity">
    <reaction evidence="1">
        <text>dTMP + ATP = dTDP + ADP</text>
        <dbReference type="Rhea" id="RHEA:13517"/>
        <dbReference type="ChEBI" id="CHEBI:30616"/>
        <dbReference type="ChEBI" id="CHEBI:58369"/>
        <dbReference type="ChEBI" id="CHEBI:63528"/>
        <dbReference type="ChEBI" id="CHEBI:456216"/>
        <dbReference type="EC" id="2.7.4.9"/>
    </reaction>
</comment>
<comment type="similarity">
    <text evidence="1">Belongs to the thymidylate kinase family.</text>
</comment>
<reference key="1">
    <citation type="journal article" date="2002" name="Lancet">
        <title>Genome and virulence determinants of high virulence community-acquired MRSA.</title>
        <authorList>
            <person name="Baba T."/>
            <person name="Takeuchi F."/>
            <person name="Kuroda M."/>
            <person name="Yuzawa H."/>
            <person name="Aoki K."/>
            <person name="Oguchi A."/>
            <person name="Nagai Y."/>
            <person name="Iwama N."/>
            <person name="Asano K."/>
            <person name="Naimi T."/>
            <person name="Kuroda H."/>
            <person name="Cui L."/>
            <person name="Yamamoto K."/>
            <person name="Hiramatsu K."/>
        </authorList>
    </citation>
    <scope>NUCLEOTIDE SEQUENCE [LARGE SCALE GENOMIC DNA]</scope>
    <source>
        <strain>MW2</strain>
    </source>
</reference>
<dbReference type="EC" id="2.7.4.9" evidence="1"/>
<dbReference type="EMBL" id="BA000033">
    <property type="protein sequence ID" value="BAB94302.1"/>
    <property type="molecule type" value="Genomic_DNA"/>
</dbReference>
<dbReference type="RefSeq" id="WP_001272131.1">
    <property type="nucleotide sequence ID" value="NC_003923.1"/>
</dbReference>
<dbReference type="SMR" id="Q8NY05"/>
<dbReference type="KEGG" id="sam:MW0437"/>
<dbReference type="HOGENOM" id="CLU_049131_0_2_9"/>
<dbReference type="GO" id="GO:0005829">
    <property type="term" value="C:cytosol"/>
    <property type="evidence" value="ECO:0007669"/>
    <property type="project" value="TreeGrafter"/>
</dbReference>
<dbReference type="GO" id="GO:0005524">
    <property type="term" value="F:ATP binding"/>
    <property type="evidence" value="ECO:0007669"/>
    <property type="project" value="UniProtKB-UniRule"/>
</dbReference>
<dbReference type="GO" id="GO:0004798">
    <property type="term" value="F:dTMP kinase activity"/>
    <property type="evidence" value="ECO:0007669"/>
    <property type="project" value="UniProtKB-UniRule"/>
</dbReference>
<dbReference type="GO" id="GO:0006233">
    <property type="term" value="P:dTDP biosynthetic process"/>
    <property type="evidence" value="ECO:0007669"/>
    <property type="project" value="InterPro"/>
</dbReference>
<dbReference type="GO" id="GO:0006235">
    <property type="term" value="P:dTTP biosynthetic process"/>
    <property type="evidence" value="ECO:0007669"/>
    <property type="project" value="UniProtKB-UniRule"/>
</dbReference>
<dbReference type="GO" id="GO:0006227">
    <property type="term" value="P:dUDP biosynthetic process"/>
    <property type="evidence" value="ECO:0007669"/>
    <property type="project" value="TreeGrafter"/>
</dbReference>
<dbReference type="CDD" id="cd01672">
    <property type="entry name" value="TMPK"/>
    <property type="match status" value="1"/>
</dbReference>
<dbReference type="FunFam" id="3.40.50.300:FF:000225">
    <property type="entry name" value="Thymidylate kinase"/>
    <property type="match status" value="1"/>
</dbReference>
<dbReference type="Gene3D" id="3.40.50.300">
    <property type="entry name" value="P-loop containing nucleotide triphosphate hydrolases"/>
    <property type="match status" value="1"/>
</dbReference>
<dbReference type="HAMAP" id="MF_00165">
    <property type="entry name" value="Thymidylate_kinase"/>
    <property type="match status" value="1"/>
</dbReference>
<dbReference type="InterPro" id="IPR027417">
    <property type="entry name" value="P-loop_NTPase"/>
</dbReference>
<dbReference type="InterPro" id="IPR039430">
    <property type="entry name" value="Thymidylate_kin-like_dom"/>
</dbReference>
<dbReference type="InterPro" id="IPR018095">
    <property type="entry name" value="Thymidylate_kin_CS"/>
</dbReference>
<dbReference type="InterPro" id="IPR018094">
    <property type="entry name" value="Thymidylate_kinase"/>
</dbReference>
<dbReference type="NCBIfam" id="TIGR00041">
    <property type="entry name" value="DTMP_kinase"/>
    <property type="match status" value="1"/>
</dbReference>
<dbReference type="PANTHER" id="PTHR10344">
    <property type="entry name" value="THYMIDYLATE KINASE"/>
    <property type="match status" value="1"/>
</dbReference>
<dbReference type="PANTHER" id="PTHR10344:SF4">
    <property type="entry name" value="UMP-CMP KINASE 2, MITOCHONDRIAL"/>
    <property type="match status" value="1"/>
</dbReference>
<dbReference type="Pfam" id="PF02223">
    <property type="entry name" value="Thymidylate_kin"/>
    <property type="match status" value="1"/>
</dbReference>
<dbReference type="SUPFAM" id="SSF52540">
    <property type="entry name" value="P-loop containing nucleoside triphosphate hydrolases"/>
    <property type="match status" value="1"/>
</dbReference>
<dbReference type="PROSITE" id="PS01331">
    <property type="entry name" value="THYMIDYLATE_KINASE"/>
    <property type="match status" value="1"/>
</dbReference>
<name>KTHY_STAAW</name>
<evidence type="ECO:0000255" key="1">
    <source>
        <dbReference type="HAMAP-Rule" id="MF_00165"/>
    </source>
</evidence>